<dbReference type="EMBL" id="CP001113">
    <property type="protein sequence ID" value="ACF63562.1"/>
    <property type="molecule type" value="Genomic_DNA"/>
</dbReference>
<dbReference type="RefSeq" id="WP_001257852.1">
    <property type="nucleotide sequence ID" value="NZ_CCMR01000001.1"/>
</dbReference>
<dbReference type="SMR" id="B4T770"/>
<dbReference type="KEGG" id="see:SNSL254_A3623"/>
<dbReference type="HOGENOM" id="CLU_097103_2_0_6"/>
<dbReference type="UniPathway" id="UPA00068"/>
<dbReference type="Proteomes" id="UP000008824">
    <property type="component" value="Chromosome"/>
</dbReference>
<dbReference type="GO" id="GO:0005737">
    <property type="term" value="C:cytoplasm"/>
    <property type="evidence" value="ECO:0007669"/>
    <property type="project" value="UniProtKB-SubCell"/>
</dbReference>
<dbReference type="GO" id="GO:0034618">
    <property type="term" value="F:arginine binding"/>
    <property type="evidence" value="ECO:0007669"/>
    <property type="project" value="InterPro"/>
</dbReference>
<dbReference type="GO" id="GO:0003677">
    <property type="term" value="F:DNA binding"/>
    <property type="evidence" value="ECO:0007669"/>
    <property type="project" value="UniProtKB-KW"/>
</dbReference>
<dbReference type="GO" id="GO:0003700">
    <property type="term" value="F:DNA-binding transcription factor activity"/>
    <property type="evidence" value="ECO:0007669"/>
    <property type="project" value="UniProtKB-UniRule"/>
</dbReference>
<dbReference type="GO" id="GO:0006526">
    <property type="term" value="P:L-arginine biosynthetic process"/>
    <property type="evidence" value="ECO:0007669"/>
    <property type="project" value="UniProtKB-UniPathway"/>
</dbReference>
<dbReference type="GO" id="GO:0051259">
    <property type="term" value="P:protein complex oligomerization"/>
    <property type="evidence" value="ECO:0007669"/>
    <property type="project" value="InterPro"/>
</dbReference>
<dbReference type="GO" id="GO:1900079">
    <property type="term" value="P:regulation of arginine biosynthetic process"/>
    <property type="evidence" value="ECO:0007669"/>
    <property type="project" value="UniProtKB-UniRule"/>
</dbReference>
<dbReference type="FunFam" id="1.10.10.10:FF:000074">
    <property type="entry name" value="Arginine repressor"/>
    <property type="match status" value="1"/>
</dbReference>
<dbReference type="FunFam" id="3.30.1360.40:FF:000004">
    <property type="entry name" value="Arginine repressor"/>
    <property type="match status" value="1"/>
</dbReference>
<dbReference type="Gene3D" id="3.30.1360.40">
    <property type="match status" value="1"/>
</dbReference>
<dbReference type="Gene3D" id="1.10.10.10">
    <property type="entry name" value="Winged helix-like DNA-binding domain superfamily/Winged helix DNA-binding domain"/>
    <property type="match status" value="1"/>
</dbReference>
<dbReference type="HAMAP" id="MF_00173">
    <property type="entry name" value="Arg_repressor"/>
    <property type="match status" value="1"/>
</dbReference>
<dbReference type="InterPro" id="IPR001669">
    <property type="entry name" value="Arg_repress"/>
</dbReference>
<dbReference type="InterPro" id="IPR020899">
    <property type="entry name" value="Arg_repress_C"/>
</dbReference>
<dbReference type="InterPro" id="IPR036251">
    <property type="entry name" value="Arg_repress_C_sf"/>
</dbReference>
<dbReference type="InterPro" id="IPR020900">
    <property type="entry name" value="Arg_repress_DNA-bd"/>
</dbReference>
<dbReference type="InterPro" id="IPR036388">
    <property type="entry name" value="WH-like_DNA-bd_sf"/>
</dbReference>
<dbReference type="InterPro" id="IPR036390">
    <property type="entry name" value="WH_DNA-bd_sf"/>
</dbReference>
<dbReference type="NCBIfam" id="TIGR01529">
    <property type="entry name" value="argR_whole"/>
    <property type="match status" value="1"/>
</dbReference>
<dbReference type="NCBIfam" id="NF003457">
    <property type="entry name" value="PRK05066.1"/>
    <property type="match status" value="1"/>
</dbReference>
<dbReference type="PANTHER" id="PTHR34471">
    <property type="entry name" value="ARGININE REPRESSOR"/>
    <property type="match status" value="1"/>
</dbReference>
<dbReference type="PANTHER" id="PTHR34471:SF1">
    <property type="entry name" value="ARGININE REPRESSOR"/>
    <property type="match status" value="1"/>
</dbReference>
<dbReference type="Pfam" id="PF01316">
    <property type="entry name" value="Arg_repressor"/>
    <property type="match status" value="1"/>
</dbReference>
<dbReference type="Pfam" id="PF02863">
    <property type="entry name" value="Arg_repressor_C"/>
    <property type="match status" value="1"/>
</dbReference>
<dbReference type="PRINTS" id="PR01467">
    <property type="entry name" value="ARGREPRESSOR"/>
</dbReference>
<dbReference type="SUPFAM" id="SSF55252">
    <property type="entry name" value="C-terminal domain of arginine repressor"/>
    <property type="match status" value="1"/>
</dbReference>
<dbReference type="SUPFAM" id="SSF46785">
    <property type="entry name" value="Winged helix' DNA-binding domain"/>
    <property type="match status" value="1"/>
</dbReference>
<comment type="function">
    <text evidence="1">Regulates arginine biosynthesis genes.</text>
</comment>
<comment type="pathway">
    <text>Amino-acid biosynthesis; L-arginine biosynthesis [regulation].</text>
</comment>
<comment type="subcellular location">
    <subcellularLocation>
        <location evidence="1">Cytoplasm</location>
    </subcellularLocation>
</comment>
<comment type="similarity">
    <text evidence="1">Belongs to the ArgR family.</text>
</comment>
<protein>
    <recommendedName>
        <fullName evidence="1">Arginine repressor</fullName>
    </recommendedName>
</protein>
<feature type="chain" id="PRO_1000097885" description="Arginine repressor">
    <location>
        <begin position="1"/>
        <end position="156"/>
    </location>
</feature>
<organism>
    <name type="scientific">Salmonella newport (strain SL254)</name>
    <dbReference type="NCBI Taxonomy" id="423368"/>
    <lineage>
        <taxon>Bacteria</taxon>
        <taxon>Pseudomonadati</taxon>
        <taxon>Pseudomonadota</taxon>
        <taxon>Gammaproteobacteria</taxon>
        <taxon>Enterobacterales</taxon>
        <taxon>Enterobacteriaceae</taxon>
        <taxon>Salmonella</taxon>
    </lineage>
</organism>
<reference key="1">
    <citation type="journal article" date="2011" name="J. Bacteriol.">
        <title>Comparative genomics of 28 Salmonella enterica isolates: evidence for CRISPR-mediated adaptive sublineage evolution.</title>
        <authorList>
            <person name="Fricke W.F."/>
            <person name="Mammel M.K."/>
            <person name="McDermott P.F."/>
            <person name="Tartera C."/>
            <person name="White D.G."/>
            <person name="Leclerc J.E."/>
            <person name="Ravel J."/>
            <person name="Cebula T.A."/>
        </authorList>
    </citation>
    <scope>NUCLEOTIDE SEQUENCE [LARGE SCALE GENOMIC DNA]</scope>
    <source>
        <strain>SL254</strain>
    </source>
</reference>
<sequence length="156" mass="17066">MRSSAKQEELVRAFKALLKEEKFSSQGEIVLALQDQGFENINQSKVSRMLTKFGAVRTRNAKMEMVYCLPAELGVPTTSSPLKNLVLDIDYNDAVVVIHTSPGAAQLIARLLDSLGKAEGILGTIAGDDTIFTTPASGFSVRDLYEAILELFEQEL</sequence>
<gene>
    <name evidence="1" type="primary">argR</name>
    <name type="ordered locus">SNSL254_A3623</name>
</gene>
<name>ARGR_SALNS</name>
<proteinExistence type="inferred from homology"/>
<evidence type="ECO:0000255" key="1">
    <source>
        <dbReference type="HAMAP-Rule" id="MF_00173"/>
    </source>
</evidence>
<accession>B4T770</accession>
<keyword id="KW-0028">Amino-acid biosynthesis</keyword>
<keyword id="KW-0055">Arginine biosynthesis</keyword>
<keyword id="KW-0963">Cytoplasm</keyword>
<keyword id="KW-0238">DNA-binding</keyword>
<keyword id="KW-0678">Repressor</keyword>
<keyword id="KW-0804">Transcription</keyword>
<keyword id="KW-0805">Transcription regulation</keyword>